<keyword id="KW-0029">Amino-acid transport</keyword>
<keyword id="KW-1003">Cell membrane</keyword>
<keyword id="KW-0472">Membrane</keyword>
<keyword id="KW-1185">Reference proteome</keyword>
<keyword id="KW-0812">Transmembrane</keyword>
<keyword id="KW-1133">Transmembrane helix</keyword>
<keyword id="KW-0813">Transport</keyword>
<organism>
    <name type="scientific">Bacillus subtilis (strain 168)</name>
    <dbReference type="NCBI Taxonomy" id="224308"/>
    <lineage>
        <taxon>Bacteria</taxon>
        <taxon>Bacillati</taxon>
        <taxon>Bacillota</taxon>
        <taxon>Bacilli</taxon>
        <taxon>Bacillales</taxon>
        <taxon>Bacillaceae</taxon>
        <taxon>Bacillus</taxon>
    </lineage>
</organism>
<feature type="chain" id="PRO_0000060278" description="Probable amino-acid permease protein YxeN">
    <location>
        <begin position="1"/>
        <end position="224"/>
    </location>
</feature>
<feature type="transmembrane region" description="Helical" evidence="1">
    <location>
        <begin position="3"/>
        <end position="23"/>
    </location>
</feature>
<feature type="transmembrane region" description="Helical" evidence="1">
    <location>
        <begin position="24"/>
        <end position="44"/>
    </location>
</feature>
<feature type="transmembrane region" description="Helical" evidence="1">
    <location>
        <begin position="58"/>
        <end position="78"/>
    </location>
</feature>
<feature type="transmembrane region" description="Helical" evidence="1">
    <location>
        <begin position="91"/>
        <end position="111"/>
    </location>
</feature>
<feature type="transmembrane region" description="Helical" evidence="1">
    <location>
        <begin position="157"/>
        <end position="177"/>
    </location>
</feature>
<feature type="transmembrane region" description="Helical" evidence="1">
    <location>
        <begin position="190"/>
        <end position="210"/>
    </location>
</feature>
<feature type="domain" description="ABC transmembrane type-1" evidence="1">
    <location>
        <begin position="20"/>
        <end position="211"/>
    </location>
</feature>
<proteinExistence type="evidence at protein level"/>
<sequence length="224" mass="25007">MNTIDWEFMISAFPTLIQALPITLFMAIAAMIFAIIGGLILALITKNKIPVLHQLSKLYISFFRGVPTLVQLFLIYYGLPQLFPEMSKMTALTAAIIGLSLKNAAYLAEIFRAALNSVDDGQLEACLSVGMTKFQAYRRIILPQAIRNAIPATGNTFIGLLKETSLAFTLGVMEMFAQGKMYASGNLKYFETYLAVAIVYWVLTIIYSILQDLFERAMSKPYRT</sequence>
<accession>P54953</accession>
<reference key="1">
    <citation type="journal article" date="1995" name="DNA Res.">
        <title>Cloning and sequencing of a 23-kb region of the Bacillus subtilis genome between the iol and hut operons.</title>
        <authorList>
            <person name="Yoshida K."/>
            <person name="Fujimyra M."/>
            <person name="Yanai N."/>
            <person name="Fujita Y."/>
        </authorList>
    </citation>
    <scope>NUCLEOTIDE SEQUENCE [GENOMIC DNA]</scope>
    <source>
        <strain>168 / BGSC1A1</strain>
    </source>
</reference>
<reference key="2">
    <citation type="journal article" date="1997" name="Nature">
        <title>The complete genome sequence of the Gram-positive bacterium Bacillus subtilis.</title>
        <authorList>
            <person name="Kunst F."/>
            <person name="Ogasawara N."/>
            <person name="Moszer I."/>
            <person name="Albertini A.M."/>
            <person name="Alloni G."/>
            <person name="Azevedo V."/>
            <person name="Bertero M.G."/>
            <person name="Bessieres P."/>
            <person name="Bolotin A."/>
            <person name="Borchert S."/>
            <person name="Borriss R."/>
            <person name="Boursier L."/>
            <person name="Brans A."/>
            <person name="Braun M."/>
            <person name="Brignell S.C."/>
            <person name="Bron S."/>
            <person name="Brouillet S."/>
            <person name="Bruschi C.V."/>
            <person name="Caldwell B."/>
            <person name="Capuano V."/>
            <person name="Carter N.M."/>
            <person name="Choi S.-K."/>
            <person name="Codani J.-J."/>
            <person name="Connerton I.F."/>
            <person name="Cummings N.J."/>
            <person name="Daniel R.A."/>
            <person name="Denizot F."/>
            <person name="Devine K.M."/>
            <person name="Duesterhoeft A."/>
            <person name="Ehrlich S.D."/>
            <person name="Emmerson P.T."/>
            <person name="Entian K.-D."/>
            <person name="Errington J."/>
            <person name="Fabret C."/>
            <person name="Ferrari E."/>
            <person name="Foulger D."/>
            <person name="Fritz C."/>
            <person name="Fujita M."/>
            <person name="Fujita Y."/>
            <person name="Fuma S."/>
            <person name="Galizzi A."/>
            <person name="Galleron N."/>
            <person name="Ghim S.-Y."/>
            <person name="Glaser P."/>
            <person name="Goffeau A."/>
            <person name="Golightly E.J."/>
            <person name="Grandi G."/>
            <person name="Guiseppi G."/>
            <person name="Guy B.J."/>
            <person name="Haga K."/>
            <person name="Haiech J."/>
            <person name="Harwood C.R."/>
            <person name="Henaut A."/>
            <person name="Hilbert H."/>
            <person name="Holsappel S."/>
            <person name="Hosono S."/>
            <person name="Hullo M.-F."/>
            <person name="Itaya M."/>
            <person name="Jones L.-M."/>
            <person name="Joris B."/>
            <person name="Karamata D."/>
            <person name="Kasahara Y."/>
            <person name="Klaerr-Blanchard M."/>
            <person name="Klein C."/>
            <person name="Kobayashi Y."/>
            <person name="Koetter P."/>
            <person name="Koningstein G."/>
            <person name="Krogh S."/>
            <person name="Kumano M."/>
            <person name="Kurita K."/>
            <person name="Lapidus A."/>
            <person name="Lardinois S."/>
            <person name="Lauber J."/>
            <person name="Lazarevic V."/>
            <person name="Lee S.-M."/>
            <person name="Levine A."/>
            <person name="Liu H."/>
            <person name="Masuda S."/>
            <person name="Mauel C."/>
            <person name="Medigue C."/>
            <person name="Medina N."/>
            <person name="Mellado R.P."/>
            <person name="Mizuno M."/>
            <person name="Moestl D."/>
            <person name="Nakai S."/>
            <person name="Noback M."/>
            <person name="Noone D."/>
            <person name="O'Reilly M."/>
            <person name="Ogawa K."/>
            <person name="Ogiwara A."/>
            <person name="Oudega B."/>
            <person name="Park S.-H."/>
            <person name="Parro V."/>
            <person name="Pohl T.M."/>
            <person name="Portetelle D."/>
            <person name="Porwollik S."/>
            <person name="Prescott A.M."/>
            <person name="Presecan E."/>
            <person name="Pujic P."/>
            <person name="Purnelle B."/>
            <person name="Rapoport G."/>
            <person name="Rey M."/>
            <person name="Reynolds S."/>
            <person name="Rieger M."/>
            <person name="Rivolta C."/>
            <person name="Rocha E."/>
            <person name="Roche B."/>
            <person name="Rose M."/>
            <person name="Sadaie Y."/>
            <person name="Sato T."/>
            <person name="Scanlan E."/>
            <person name="Schleich S."/>
            <person name="Schroeter R."/>
            <person name="Scoffone F."/>
            <person name="Sekiguchi J."/>
            <person name="Sekowska A."/>
            <person name="Seror S.J."/>
            <person name="Serror P."/>
            <person name="Shin B.-S."/>
            <person name="Soldo B."/>
            <person name="Sorokin A."/>
            <person name="Tacconi E."/>
            <person name="Takagi T."/>
            <person name="Takahashi H."/>
            <person name="Takemaru K."/>
            <person name="Takeuchi M."/>
            <person name="Tamakoshi A."/>
            <person name="Tanaka T."/>
            <person name="Terpstra P."/>
            <person name="Tognoni A."/>
            <person name="Tosato V."/>
            <person name="Uchiyama S."/>
            <person name="Vandenbol M."/>
            <person name="Vannier F."/>
            <person name="Vassarotti A."/>
            <person name="Viari A."/>
            <person name="Wambutt R."/>
            <person name="Wedler E."/>
            <person name="Wedler H."/>
            <person name="Weitzenegger T."/>
            <person name="Winters P."/>
            <person name="Wipat A."/>
            <person name="Yamamoto H."/>
            <person name="Yamane K."/>
            <person name="Yasumoto K."/>
            <person name="Yata K."/>
            <person name="Yoshida K."/>
            <person name="Yoshikawa H.-F."/>
            <person name="Zumstein E."/>
            <person name="Yoshikawa H."/>
            <person name="Danchin A."/>
        </authorList>
    </citation>
    <scope>NUCLEOTIDE SEQUENCE [LARGE SCALE GENOMIC DNA]</scope>
    <source>
        <strain>168</strain>
    </source>
</reference>
<reference key="3">
    <citation type="journal article" date="2002" name="J. Bacteriol.">
        <title>Global expression profile of Bacillus subtilis grown in the presence of sulfate or methionine.</title>
        <authorList>
            <person name="Auger S."/>
            <person name="Danchin A."/>
            <person name="Martin-Verstraete I."/>
        </authorList>
    </citation>
    <scope>INDUCTION</scope>
    <source>
        <strain>168</strain>
    </source>
</reference>
<reference key="4">
    <citation type="journal article" date="2004" name="J. Bacteriol.">
        <title>Three different systems participate in L-cystine uptake in Bacillus subtilis.</title>
        <authorList>
            <person name="Burguiere P."/>
            <person name="Auger S."/>
            <person name="Hullo M.-F."/>
            <person name="Danchin A."/>
            <person name="Martin-Verstraete I."/>
        </authorList>
    </citation>
    <scope>PROBABLE FUNCTION IN S-METHYLCYSTEINE TRANSPORT</scope>
    <source>
        <strain>168</strain>
    </source>
</reference>
<comment type="function">
    <text evidence="3">Probably part of the ABC transporter complex YxeMNO that could be involved in amino-acid import. May transport S-methylcysteine. Probably responsible for the translocation of the substrate across the membrane (Probable).</text>
</comment>
<comment type="subunit">
    <text evidence="3">The complex is composed of two ATP-binding proteins (YxeO), two transmembrane proteins (YxeN) and a solute-binding protein (YxeM).</text>
</comment>
<comment type="subcellular location">
    <subcellularLocation>
        <location evidence="3">Cell membrane</location>
        <topology evidence="1">Multi-pass membrane protein</topology>
    </subcellularLocation>
</comment>
<comment type="induction">
    <text evidence="2">More strongly expressed in the presence of methionine than in the presence of sulfate.</text>
</comment>
<comment type="similarity">
    <text evidence="3">Belongs to the binding-protein-dependent transport system permease family.</text>
</comment>
<dbReference type="EMBL" id="D45912">
    <property type="protein sequence ID" value="BAA08330.1"/>
    <property type="molecule type" value="Genomic_DNA"/>
</dbReference>
<dbReference type="EMBL" id="AL009126">
    <property type="protein sequence ID" value="CAB15985.1"/>
    <property type="molecule type" value="Genomic_DNA"/>
</dbReference>
<dbReference type="PIR" id="H70075">
    <property type="entry name" value="H70075"/>
</dbReference>
<dbReference type="RefSeq" id="NP_391828.1">
    <property type="nucleotide sequence ID" value="NC_000964.3"/>
</dbReference>
<dbReference type="RefSeq" id="WP_003243465.1">
    <property type="nucleotide sequence ID" value="NZ_OZ025638.1"/>
</dbReference>
<dbReference type="SMR" id="P54953"/>
<dbReference type="FunCoup" id="P54953">
    <property type="interactions" value="136"/>
</dbReference>
<dbReference type="STRING" id="224308.BSU39490"/>
<dbReference type="PaxDb" id="224308-BSU39490"/>
<dbReference type="EnsemblBacteria" id="CAB15985">
    <property type="protein sequence ID" value="CAB15985"/>
    <property type="gene ID" value="BSU_39490"/>
</dbReference>
<dbReference type="GeneID" id="937554"/>
<dbReference type="KEGG" id="bsu:BSU39490"/>
<dbReference type="PATRIC" id="fig|224308.179.peg.4274"/>
<dbReference type="eggNOG" id="COG0765">
    <property type="taxonomic scope" value="Bacteria"/>
</dbReference>
<dbReference type="InParanoid" id="P54953"/>
<dbReference type="OrthoDB" id="9805999at2"/>
<dbReference type="PhylomeDB" id="P54953"/>
<dbReference type="BioCyc" id="BSUB:BSU39490-MONOMER"/>
<dbReference type="Proteomes" id="UP000001570">
    <property type="component" value="Chromosome"/>
</dbReference>
<dbReference type="GO" id="GO:0043190">
    <property type="term" value="C:ATP-binding cassette (ABC) transporter complex"/>
    <property type="evidence" value="ECO:0007669"/>
    <property type="project" value="InterPro"/>
</dbReference>
<dbReference type="GO" id="GO:0005886">
    <property type="term" value="C:plasma membrane"/>
    <property type="evidence" value="ECO:0000318"/>
    <property type="project" value="GO_Central"/>
</dbReference>
<dbReference type="GO" id="GO:0015184">
    <property type="term" value="F:L-cystine transmembrane transporter activity"/>
    <property type="evidence" value="ECO:0000318"/>
    <property type="project" value="GO_Central"/>
</dbReference>
<dbReference type="GO" id="GO:0015811">
    <property type="term" value="P:L-cystine transport"/>
    <property type="evidence" value="ECO:0000318"/>
    <property type="project" value="GO_Central"/>
</dbReference>
<dbReference type="CDD" id="cd06261">
    <property type="entry name" value="TM_PBP2"/>
    <property type="match status" value="1"/>
</dbReference>
<dbReference type="FunFam" id="1.10.3720.10:FF:000009">
    <property type="entry name" value="Amino acid ABC transporter permease"/>
    <property type="match status" value="1"/>
</dbReference>
<dbReference type="Gene3D" id="1.10.3720.10">
    <property type="entry name" value="MetI-like"/>
    <property type="match status" value="1"/>
</dbReference>
<dbReference type="InterPro" id="IPR010065">
    <property type="entry name" value="AA_ABC_transptr_permease_3TM"/>
</dbReference>
<dbReference type="InterPro" id="IPR043429">
    <property type="entry name" value="ArtM/GltK/GlnP/TcyL/YhdX-like"/>
</dbReference>
<dbReference type="InterPro" id="IPR000515">
    <property type="entry name" value="MetI-like"/>
</dbReference>
<dbReference type="InterPro" id="IPR035906">
    <property type="entry name" value="MetI-like_sf"/>
</dbReference>
<dbReference type="NCBIfam" id="TIGR01726">
    <property type="entry name" value="HEQRo_perm_3TM"/>
    <property type="match status" value="1"/>
</dbReference>
<dbReference type="PANTHER" id="PTHR30614:SF0">
    <property type="entry name" value="L-CYSTINE TRANSPORT SYSTEM PERMEASE PROTEIN TCYL"/>
    <property type="match status" value="1"/>
</dbReference>
<dbReference type="PANTHER" id="PTHR30614">
    <property type="entry name" value="MEMBRANE COMPONENT OF AMINO ACID ABC TRANSPORTER"/>
    <property type="match status" value="1"/>
</dbReference>
<dbReference type="Pfam" id="PF00528">
    <property type="entry name" value="BPD_transp_1"/>
    <property type="match status" value="1"/>
</dbReference>
<dbReference type="SUPFAM" id="SSF161098">
    <property type="entry name" value="MetI-like"/>
    <property type="match status" value="1"/>
</dbReference>
<dbReference type="PROSITE" id="PS50928">
    <property type="entry name" value="ABC_TM1"/>
    <property type="match status" value="1"/>
</dbReference>
<name>YXEN_BACSU</name>
<gene>
    <name type="primary">yxeN</name>
    <name type="ordered locus">BSU39490</name>
    <name type="ORF">LP9F</name>
</gene>
<evidence type="ECO:0000255" key="1">
    <source>
        <dbReference type="PROSITE-ProRule" id="PRU00441"/>
    </source>
</evidence>
<evidence type="ECO:0000269" key="2">
    <source>
    </source>
</evidence>
<evidence type="ECO:0000305" key="3"/>
<protein>
    <recommendedName>
        <fullName>Probable amino-acid permease protein YxeN</fullName>
    </recommendedName>
</protein>